<evidence type="ECO:0000250" key="1"/>
<evidence type="ECO:0000255" key="2"/>
<evidence type="ECO:0000255" key="3">
    <source>
        <dbReference type="PROSITE-ProRule" id="PRU00433"/>
    </source>
</evidence>
<reference key="1">
    <citation type="journal article" date="1998" name="Biochem. Biophys. Res. Commun.">
        <title>Genomic DNA cloning of the region encoding nitric oxide reductase in Paracoccus halodenitrificans and a structure model relevant to cytochrome oxidase.</title>
        <authorList>
            <person name="Sakurai N."/>
            <person name="Sakurai T."/>
        </authorList>
    </citation>
    <scope>NUCLEOTIDE SEQUENCE [GENOMIC DNA]</scope>
    <source>
        <strain>ATCC 13511 / DSM 735 / CIP 105456 / NBRC 14912 / NCIMB 700</strain>
    </source>
</reference>
<proteinExistence type="inferred from homology"/>
<gene>
    <name type="primary">norC</name>
</gene>
<protein>
    <recommendedName>
        <fullName>Nitric oxide reductase subunit C</fullName>
    </recommendedName>
    <alternativeName>
        <fullName>NOR small subunit</fullName>
    </alternativeName>
    <alternativeName>
        <fullName>Nitric oxide reductase cytochrome c subunit</fullName>
    </alternativeName>
</protein>
<feature type="initiator methionine" description="Removed" evidence="1">
    <location>
        <position position="1"/>
    </location>
</feature>
<feature type="chain" id="PRO_0000108423" description="Nitric oxide reductase subunit C">
    <location>
        <begin position="2"/>
        <end position="150"/>
    </location>
</feature>
<feature type="transmembrane region" description="Helical; Signal-anchor" evidence="2">
    <location>
        <begin position="13"/>
        <end position="29"/>
    </location>
</feature>
<feature type="binding site" description="covalent" evidence="3">
    <location>
        <position position="62"/>
    </location>
    <ligand>
        <name>heme c</name>
        <dbReference type="ChEBI" id="CHEBI:61717"/>
    </ligand>
</feature>
<feature type="binding site" description="covalent" evidence="3">
    <location>
        <position position="65"/>
    </location>
    <ligand>
        <name>heme c</name>
        <dbReference type="ChEBI" id="CHEBI:61717"/>
    </ligand>
</feature>
<feature type="binding site" description="axial binding residue" evidence="3">
    <location>
        <position position="66"/>
    </location>
    <ligand>
        <name>heme c</name>
        <dbReference type="ChEBI" id="CHEBI:61717"/>
    </ligand>
    <ligandPart>
        <name>Fe</name>
        <dbReference type="ChEBI" id="CHEBI:18248"/>
    </ligandPart>
</feature>
<organism>
    <name type="scientific">Halomonas halodenitrificans</name>
    <name type="common">Paracoccus halodenitrificans</name>
    <dbReference type="NCBI Taxonomy" id="28252"/>
    <lineage>
        <taxon>Bacteria</taxon>
        <taxon>Pseudomonadati</taxon>
        <taxon>Pseudomonadota</taxon>
        <taxon>Gammaproteobacteria</taxon>
        <taxon>Oceanospirillales</taxon>
        <taxon>Halomonadaceae</taxon>
        <taxon>Halomonas</taxon>
    </lineage>
</organism>
<sequence length="150" mass="16773">MADGLTKSAARNIFYGGSLFFFLLFAALTAHSHWYMVNKSTDNEGLTESVVAGKHIWEKNMCINCHSIMGEGAYFAPELSNVWERYGGHQNPEAARAGLAAWIRAQPLGTQGRRQMPAYDFTDEEMSSLIDFLEWTDGIDDQDWPPHPAG</sequence>
<accession>O50651</accession>
<keyword id="KW-1003">Cell membrane</keyword>
<keyword id="KW-0249">Electron transport</keyword>
<keyword id="KW-0349">Heme</keyword>
<keyword id="KW-0408">Iron</keyword>
<keyword id="KW-0472">Membrane</keyword>
<keyword id="KW-0479">Metal-binding</keyword>
<keyword id="KW-0679">Respiratory chain</keyword>
<keyword id="KW-0735">Signal-anchor</keyword>
<keyword id="KW-0812">Transmembrane</keyword>
<keyword id="KW-1133">Transmembrane helix</keyword>
<keyword id="KW-0813">Transport</keyword>
<name>NORC_HALHD</name>
<dbReference type="EMBL" id="AB010889">
    <property type="protein sequence ID" value="BAA24700.1"/>
    <property type="molecule type" value="Genomic_DNA"/>
</dbReference>
<dbReference type="PIR" id="JE0165">
    <property type="entry name" value="JE0165"/>
</dbReference>
<dbReference type="SMR" id="O50651"/>
<dbReference type="BRENDA" id="1.7.2.5">
    <property type="organism ID" value="3346"/>
</dbReference>
<dbReference type="GO" id="GO:0005886">
    <property type="term" value="C:plasma membrane"/>
    <property type="evidence" value="ECO:0007669"/>
    <property type="project" value="UniProtKB-SubCell"/>
</dbReference>
<dbReference type="GO" id="GO:0009055">
    <property type="term" value="F:electron transfer activity"/>
    <property type="evidence" value="ECO:0007669"/>
    <property type="project" value="InterPro"/>
</dbReference>
<dbReference type="GO" id="GO:0020037">
    <property type="term" value="F:heme binding"/>
    <property type="evidence" value="ECO:0007669"/>
    <property type="project" value="InterPro"/>
</dbReference>
<dbReference type="GO" id="GO:0046872">
    <property type="term" value="F:metal ion binding"/>
    <property type="evidence" value="ECO:0007669"/>
    <property type="project" value="UniProtKB-KW"/>
</dbReference>
<dbReference type="Gene3D" id="1.10.760.10">
    <property type="entry name" value="Cytochrome c-like domain"/>
    <property type="match status" value="1"/>
</dbReference>
<dbReference type="InterPro" id="IPR009056">
    <property type="entry name" value="Cyt_c-like_dom"/>
</dbReference>
<dbReference type="InterPro" id="IPR036909">
    <property type="entry name" value="Cyt_c-like_dom_sf"/>
</dbReference>
<dbReference type="Pfam" id="PF00034">
    <property type="entry name" value="Cytochrom_C"/>
    <property type="match status" value="1"/>
</dbReference>
<dbReference type="SUPFAM" id="SSF46626">
    <property type="entry name" value="Cytochrome c"/>
    <property type="match status" value="1"/>
</dbReference>
<dbReference type="PROSITE" id="PS51007">
    <property type="entry name" value="CYTC"/>
    <property type="match status" value="1"/>
</dbReference>
<comment type="function">
    <text>Component of the anaerobic respiratory chain that transforms nitrate to dinitrogen (denitrification).</text>
</comment>
<comment type="subunit">
    <text evidence="1">Heterodimer of cytochromes b (large subunit) and c (small subunit).</text>
</comment>
<comment type="subcellular location">
    <subcellularLocation>
        <location evidence="1">Cell membrane</location>
        <topology evidence="1">Single-pass membrane protein</topology>
    </subcellularLocation>
    <text evidence="1">May be attached to the membrane by a signal-anchor.</text>
</comment>